<protein>
    <recommendedName>
        <fullName evidence="1">Putative phosphoesterase BA_1241/GBAA_1241/BAS1148</fullName>
        <ecNumber evidence="1">3.1.-.-</ecNumber>
    </recommendedName>
</protein>
<sequence length="172" mass="19877">MKLGIVIFPSKMIQDKANGLRKRYDPHYALVPPHITLKTPFETQDEQLESIVNKLHTIASKTNPFTLHVGKVGSFAPVNNVIYFKVEKTPELTFLNEEMHSGFFTQEREYAFVPHLTIGQGLSDAEHADVLGRLRMKDFYYEQPIDRFHLLYQLENGTWTVHETFRLGKGNN</sequence>
<gene>
    <name type="ordered locus">BA_1241</name>
    <name type="ordered locus">GBAA_1241</name>
    <name type="ordered locus">BAS1148</name>
</gene>
<name>Y1241_BACAN</name>
<keyword id="KW-0378">Hydrolase</keyword>
<keyword id="KW-1185">Reference proteome</keyword>
<comment type="similarity">
    <text evidence="1">Belongs to the 2H phosphoesterase superfamily. YjcG family.</text>
</comment>
<dbReference type="EC" id="3.1.-.-" evidence="1"/>
<dbReference type="EMBL" id="AE016879">
    <property type="protein sequence ID" value="AAP25199.1"/>
    <property type="molecule type" value="Genomic_DNA"/>
</dbReference>
<dbReference type="EMBL" id="AE017334">
    <property type="protein sequence ID" value="AAT30330.1"/>
    <property type="molecule type" value="Genomic_DNA"/>
</dbReference>
<dbReference type="EMBL" id="AE017225">
    <property type="protein sequence ID" value="AAT53471.1"/>
    <property type="molecule type" value="Genomic_DNA"/>
</dbReference>
<dbReference type="RefSeq" id="NP_843713.1">
    <property type="nucleotide sequence ID" value="NC_003997.3"/>
</dbReference>
<dbReference type="RefSeq" id="WP_000765879.1">
    <property type="nucleotide sequence ID" value="NZ_WXXJ01000020.1"/>
</dbReference>
<dbReference type="RefSeq" id="YP_027420.1">
    <property type="nucleotide sequence ID" value="NC_005945.1"/>
</dbReference>
<dbReference type="SMR" id="Q81TN0"/>
<dbReference type="STRING" id="261594.GBAA_1241"/>
<dbReference type="DNASU" id="1087677"/>
<dbReference type="GeneID" id="45021242"/>
<dbReference type="KEGG" id="ban:BA_1241"/>
<dbReference type="KEGG" id="banh:HYU01_06365"/>
<dbReference type="KEGG" id="bar:GBAA_1241"/>
<dbReference type="KEGG" id="bat:BAS1148"/>
<dbReference type="PATRIC" id="fig|198094.11.peg.1217"/>
<dbReference type="eggNOG" id="COG1514">
    <property type="taxonomic scope" value="Bacteria"/>
</dbReference>
<dbReference type="HOGENOM" id="CLU_132020_0_0_9"/>
<dbReference type="OMA" id="RELQFPY"/>
<dbReference type="OrthoDB" id="1524661at2"/>
<dbReference type="Proteomes" id="UP000000427">
    <property type="component" value="Chromosome"/>
</dbReference>
<dbReference type="Proteomes" id="UP000000594">
    <property type="component" value="Chromosome"/>
</dbReference>
<dbReference type="GO" id="GO:0016788">
    <property type="term" value="F:hydrolase activity, acting on ester bonds"/>
    <property type="evidence" value="ECO:0007669"/>
    <property type="project" value="UniProtKB-UniRule"/>
</dbReference>
<dbReference type="Gene3D" id="3.90.1140.10">
    <property type="entry name" value="Cyclic phosphodiesterase"/>
    <property type="match status" value="1"/>
</dbReference>
<dbReference type="HAMAP" id="MF_01444">
    <property type="entry name" value="2H_phosphoesterase_YjcG"/>
    <property type="match status" value="1"/>
</dbReference>
<dbReference type="InterPro" id="IPR050580">
    <property type="entry name" value="2H_phosphoesterase_YjcG-like"/>
</dbReference>
<dbReference type="InterPro" id="IPR009097">
    <property type="entry name" value="Cyclic_Pdiesterase"/>
</dbReference>
<dbReference type="InterPro" id="IPR022932">
    <property type="entry name" value="YjcG"/>
</dbReference>
<dbReference type="NCBIfam" id="NF010223">
    <property type="entry name" value="PRK13679.1"/>
    <property type="match status" value="1"/>
</dbReference>
<dbReference type="PANTHER" id="PTHR40037:SF1">
    <property type="entry name" value="PHOSPHOESTERASE SAOUHSC_00951-RELATED"/>
    <property type="match status" value="1"/>
</dbReference>
<dbReference type="PANTHER" id="PTHR40037">
    <property type="entry name" value="PHOSPHOESTERASE YJCG-RELATED"/>
    <property type="match status" value="1"/>
</dbReference>
<dbReference type="Pfam" id="PF13563">
    <property type="entry name" value="2_5_RNA_ligase2"/>
    <property type="match status" value="1"/>
</dbReference>
<dbReference type="SUPFAM" id="SSF55144">
    <property type="entry name" value="LigT-like"/>
    <property type="match status" value="1"/>
</dbReference>
<accession>Q81TN0</accession>
<accession>Q6I1W0</accession>
<accession>Q6KVQ2</accession>
<proteinExistence type="inferred from homology"/>
<feature type="chain" id="PRO_0000299324" description="Putative phosphoesterase BA_1241/GBAA_1241/BAS1148">
    <location>
        <begin position="1"/>
        <end position="172"/>
    </location>
</feature>
<feature type="short sequence motif" description="HXTX 1" evidence="1">
    <location>
        <begin position="34"/>
        <end position="37"/>
    </location>
</feature>
<feature type="short sequence motif" description="HXTX 2" evidence="1">
    <location>
        <begin position="115"/>
        <end position="118"/>
    </location>
</feature>
<feature type="active site" description="Proton donor" evidence="1">
    <location>
        <position position="34"/>
    </location>
</feature>
<feature type="active site" description="Proton acceptor" evidence="1">
    <location>
        <position position="115"/>
    </location>
</feature>
<organism>
    <name type="scientific">Bacillus anthracis</name>
    <dbReference type="NCBI Taxonomy" id="1392"/>
    <lineage>
        <taxon>Bacteria</taxon>
        <taxon>Bacillati</taxon>
        <taxon>Bacillota</taxon>
        <taxon>Bacilli</taxon>
        <taxon>Bacillales</taxon>
        <taxon>Bacillaceae</taxon>
        <taxon>Bacillus</taxon>
        <taxon>Bacillus cereus group</taxon>
    </lineage>
</organism>
<evidence type="ECO:0000255" key="1">
    <source>
        <dbReference type="HAMAP-Rule" id="MF_01444"/>
    </source>
</evidence>
<reference key="1">
    <citation type="journal article" date="2003" name="Nature">
        <title>The genome sequence of Bacillus anthracis Ames and comparison to closely related bacteria.</title>
        <authorList>
            <person name="Read T.D."/>
            <person name="Peterson S.N."/>
            <person name="Tourasse N.J."/>
            <person name="Baillie L.W."/>
            <person name="Paulsen I.T."/>
            <person name="Nelson K.E."/>
            <person name="Tettelin H."/>
            <person name="Fouts D.E."/>
            <person name="Eisen J.A."/>
            <person name="Gill S.R."/>
            <person name="Holtzapple E.K."/>
            <person name="Okstad O.A."/>
            <person name="Helgason E."/>
            <person name="Rilstone J."/>
            <person name="Wu M."/>
            <person name="Kolonay J.F."/>
            <person name="Beanan M.J."/>
            <person name="Dodson R.J."/>
            <person name="Brinkac L.M."/>
            <person name="Gwinn M.L."/>
            <person name="DeBoy R.T."/>
            <person name="Madpu R."/>
            <person name="Daugherty S.C."/>
            <person name="Durkin A.S."/>
            <person name="Haft D.H."/>
            <person name="Nelson W.C."/>
            <person name="Peterson J.D."/>
            <person name="Pop M."/>
            <person name="Khouri H.M."/>
            <person name="Radune D."/>
            <person name="Benton J.L."/>
            <person name="Mahamoud Y."/>
            <person name="Jiang L."/>
            <person name="Hance I.R."/>
            <person name="Weidman J.F."/>
            <person name="Berry K.J."/>
            <person name="Plaut R.D."/>
            <person name="Wolf A.M."/>
            <person name="Watkins K.L."/>
            <person name="Nierman W.C."/>
            <person name="Hazen A."/>
            <person name="Cline R.T."/>
            <person name="Redmond C."/>
            <person name="Thwaite J.E."/>
            <person name="White O."/>
            <person name="Salzberg S.L."/>
            <person name="Thomason B."/>
            <person name="Friedlander A.M."/>
            <person name="Koehler T.M."/>
            <person name="Hanna P.C."/>
            <person name="Kolstoe A.-B."/>
            <person name="Fraser C.M."/>
        </authorList>
    </citation>
    <scope>NUCLEOTIDE SEQUENCE [LARGE SCALE GENOMIC DNA]</scope>
    <source>
        <strain>Ames / isolate Porton</strain>
    </source>
</reference>
<reference key="2">
    <citation type="submission" date="2004-01" db="EMBL/GenBank/DDBJ databases">
        <title>Complete genome sequence of Bacillus anthracis Sterne.</title>
        <authorList>
            <person name="Brettin T.S."/>
            <person name="Bruce D."/>
            <person name="Challacombe J.F."/>
            <person name="Gilna P."/>
            <person name="Han C."/>
            <person name="Hill K."/>
            <person name="Hitchcock P."/>
            <person name="Jackson P."/>
            <person name="Keim P."/>
            <person name="Longmire J."/>
            <person name="Lucas S."/>
            <person name="Okinaka R."/>
            <person name="Richardson P."/>
            <person name="Rubin E."/>
            <person name="Tice H."/>
        </authorList>
    </citation>
    <scope>NUCLEOTIDE SEQUENCE [LARGE SCALE GENOMIC DNA]</scope>
    <source>
        <strain>Sterne</strain>
    </source>
</reference>
<reference key="3">
    <citation type="journal article" date="2009" name="J. Bacteriol.">
        <title>The complete genome sequence of Bacillus anthracis Ames 'Ancestor'.</title>
        <authorList>
            <person name="Ravel J."/>
            <person name="Jiang L."/>
            <person name="Stanley S.T."/>
            <person name="Wilson M.R."/>
            <person name="Decker R.S."/>
            <person name="Read T.D."/>
            <person name="Worsham P."/>
            <person name="Keim P.S."/>
            <person name="Salzberg S.L."/>
            <person name="Fraser-Liggett C.M."/>
            <person name="Rasko D.A."/>
        </authorList>
    </citation>
    <scope>NUCLEOTIDE SEQUENCE [LARGE SCALE GENOMIC DNA]</scope>
    <source>
        <strain>Ames ancestor</strain>
    </source>
</reference>